<accession>Q9BP86</accession>
<feature type="signal peptide" evidence="2">
    <location>
        <begin position="1"/>
        <end position="22"/>
    </location>
</feature>
<feature type="propeptide" id="PRO_0000404714" evidence="1">
    <location>
        <begin position="23"/>
        <end position="47"/>
    </location>
</feature>
<feature type="peptide" id="PRO_0000404715" description="Conotoxin ArMKLT2-0313">
    <location>
        <begin position="48"/>
        <end position="78"/>
    </location>
</feature>
<feature type="modified residue" description="Pyrrolidone carboxylic acid" evidence="1">
    <location>
        <position position="48"/>
    </location>
</feature>
<feature type="disulfide bond" evidence="1">
    <location>
        <begin position="49"/>
        <end position="62"/>
    </location>
</feature>
<feature type="disulfide bond" evidence="1">
    <location>
        <begin position="56"/>
        <end position="67"/>
    </location>
</feature>
<feature type="disulfide bond" evidence="1">
    <location>
        <begin position="61"/>
        <end position="75"/>
    </location>
</feature>
<evidence type="ECO:0000250" key="1"/>
<evidence type="ECO:0000255" key="2"/>
<evidence type="ECO:0000305" key="3"/>
<comment type="subcellular location">
    <subcellularLocation>
        <location evidence="1">Secreted</location>
    </subcellularLocation>
</comment>
<comment type="tissue specificity">
    <text>Expressed by the venom duct.</text>
</comment>
<comment type="domain">
    <text evidence="1">The presence of a 'disulfide through disulfide knot' structurally defines this protein as a knottin.</text>
</comment>
<comment type="domain">
    <text>The cysteine framework is VI/VII (C-C-CC-C-C).</text>
</comment>
<comment type="similarity">
    <text evidence="3">Belongs to the conotoxin O1 superfamily.</text>
</comment>
<protein>
    <recommendedName>
        <fullName>Conotoxin ArMKLT2-0313</fullName>
    </recommendedName>
</protein>
<proteinExistence type="evidence at transcript level"/>
<dbReference type="EMBL" id="AF215052">
    <property type="protein sequence ID" value="AAG60480.1"/>
    <property type="molecule type" value="mRNA"/>
</dbReference>
<dbReference type="SMR" id="Q9BP86"/>
<dbReference type="ConoServer" id="739">
    <property type="toxin name" value="Ar6.10 precursor"/>
</dbReference>
<dbReference type="GO" id="GO:0005576">
    <property type="term" value="C:extracellular region"/>
    <property type="evidence" value="ECO:0007669"/>
    <property type="project" value="UniProtKB-SubCell"/>
</dbReference>
<dbReference type="GO" id="GO:0008200">
    <property type="term" value="F:ion channel inhibitor activity"/>
    <property type="evidence" value="ECO:0007669"/>
    <property type="project" value="InterPro"/>
</dbReference>
<dbReference type="GO" id="GO:0090729">
    <property type="term" value="F:toxin activity"/>
    <property type="evidence" value="ECO:0007669"/>
    <property type="project" value="UniProtKB-KW"/>
</dbReference>
<dbReference type="InterPro" id="IPR004214">
    <property type="entry name" value="Conotoxin"/>
</dbReference>
<dbReference type="Pfam" id="PF02950">
    <property type="entry name" value="Conotoxin"/>
    <property type="match status" value="1"/>
</dbReference>
<keyword id="KW-1015">Disulfide bond</keyword>
<keyword id="KW-0960">Knottin</keyword>
<keyword id="KW-0528">Neurotoxin</keyword>
<keyword id="KW-0873">Pyrrolidone carboxylic acid</keyword>
<keyword id="KW-0964">Secreted</keyword>
<keyword id="KW-0732">Signal</keyword>
<keyword id="KW-0800">Toxin</keyword>
<organism>
    <name type="scientific">Conus arenatus</name>
    <name type="common">Sand-dusted cone</name>
    <dbReference type="NCBI Taxonomy" id="89451"/>
    <lineage>
        <taxon>Eukaryota</taxon>
        <taxon>Metazoa</taxon>
        <taxon>Spiralia</taxon>
        <taxon>Lophotrochozoa</taxon>
        <taxon>Mollusca</taxon>
        <taxon>Gastropoda</taxon>
        <taxon>Caenogastropoda</taxon>
        <taxon>Neogastropoda</taxon>
        <taxon>Conoidea</taxon>
        <taxon>Conidae</taxon>
        <taxon>Conus</taxon>
    </lineage>
</organism>
<reference key="1">
    <citation type="journal article" date="2001" name="Mol. Biol. Evol.">
        <title>Mechanisms for evolving hypervariability: the case of conopeptides.</title>
        <authorList>
            <person name="Conticello S.G."/>
            <person name="Gilad Y."/>
            <person name="Avidan N."/>
            <person name="Ben-Asher E."/>
            <person name="Levy Z."/>
            <person name="Fainzilber M."/>
        </authorList>
    </citation>
    <scope>NUCLEOTIDE SEQUENCE [MRNA]</scope>
    <source>
        <tissue>Venom duct</tissue>
    </source>
</reference>
<sequence>MKLTCVLIIAVLCLTVCQLITADYLRDKQKYRSVRLRDGMLNFKGSRQCADLGEECYTRFCCPGLRCKDLQVPTCLLA</sequence>
<name>O1610_CONAE</name>